<comment type="function">
    <text evidence="1">Endonuclease IV plays a role in DNA repair. It cleaves phosphodiester bonds at apurinic or apyrimidinic (AP) sites, generating a 3'-hydroxyl group and a 5'-terminal sugar phosphate.</text>
</comment>
<comment type="catalytic activity">
    <reaction evidence="1">
        <text>Endonucleolytic cleavage to 5'-phosphooligonucleotide end-products.</text>
        <dbReference type="EC" id="3.1.21.2"/>
    </reaction>
</comment>
<comment type="cofactor">
    <cofactor evidence="1">
        <name>Zn(2+)</name>
        <dbReference type="ChEBI" id="CHEBI:29105"/>
    </cofactor>
    <text evidence="1">Binds 3 Zn(2+) ions.</text>
</comment>
<comment type="similarity">
    <text evidence="1">Belongs to the AP endonuclease 2 family.</text>
</comment>
<organism>
    <name type="scientific">Listeria monocytogenes serotype 4b (strain F2365)</name>
    <dbReference type="NCBI Taxonomy" id="265669"/>
    <lineage>
        <taxon>Bacteria</taxon>
        <taxon>Bacillati</taxon>
        <taxon>Bacillota</taxon>
        <taxon>Bacilli</taxon>
        <taxon>Bacillales</taxon>
        <taxon>Listeriaceae</taxon>
        <taxon>Listeria</taxon>
    </lineage>
</organism>
<gene>
    <name evidence="1" type="primary">nfo</name>
    <name type="ordered locus">LMOf2365_1468</name>
</gene>
<feature type="chain" id="PRO_0000190847" description="Probable endonuclease 4">
    <location>
        <begin position="1"/>
        <end position="297"/>
    </location>
</feature>
<feature type="binding site" evidence="1">
    <location>
        <position position="69"/>
    </location>
    <ligand>
        <name>Zn(2+)</name>
        <dbReference type="ChEBI" id="CHEBI:29105"/>
        <label>1</label>
    </ligand>
</feature>
<feature type="binding site" evidence="1">
    <location>
        <position position="110"/>
    </location>
    <ligand>
        <name>Zn(2+)</name>
        <dbReference type="ChEBI" id="CHEBI:29105"/>
        <label>1</label>
    </ligand>
</feature>
<feature type="binding site" evidence="1">
    <location>
        <position position="145"/>
    </location>
    <ligand>
        <name>Zn(2+)</name>
        <dbReference type="ChEBI" id="CHEBI:29105"/>
        <label>1</label>
    </ligand>
</feature>
<feature type="binding site" evidence="1">
    <location>
        <position position="145"/>
    </location>
    <ligand>
        <name>Zn(2+)</name>
        <dbReference type="ChEBI" id="CHEBI:29105"/>
        <label>2</label>
    </ligand>
</feature>
<feature type="binding site" evidence="1">
    <location>
        <position position="179"/>
    </location>
    <ligand>
        <name>Zn(2+)</name>
        <dbReference type="ChEBI" id="CHEBI:29105"/>
        <label>2</label>
    </ligand>
</feature>
<feature type="binding site" evidence="1">
    <location>
        <position position="182"/>
    </location>
    <ligand>
        <name>Zn(2+)</name>
        <dbReference type="ChEBI" id="CHEBI:29105"/>
        <label>3</label>
    </ligand>
</feature>
<feature type="binding site" evidence="1">
    <location>
        <position position="214"/>
    </location>
    <ligand>
        <name>Zn(2+)</name>
        <dbReference type="ChEBI" id="CHEBI:29105"/>
        <label>2</label>
    </ligand>
</feature>
<feature type="binding site" evidence="1">
    <location>
        <position position="227"/>
    </location>
    <ligand>
        <name>Zn(2+)</name>
        <dbReference type="ChEBI" id="CHEBI:29105"/>
        <label>3</label>
    </ligand>
</feature>
<feature type="binding site" evidence="1">
    <location>
        <position position="229"/>
    </location>
    <ligand>
        <name>Zn(2+)</name>
        <dbReference type="ChEBI" id="CHEBI:29105"/>
        <label>3</label>
    </ligand>
</feature>
<feature type="binding site" evidence="1">
    <location>
        <position position="259"/>
    </location>
    <ligand>
        <name>Zn(2+)</name>
        <dbReference type="ChEBI" id="CHEBI:29105"/>
        <label>2</label>
    </ligand>
</feature>
<keyword id="KW-0227">DNA damage</keyword>
<keyword id="KW-0234">DNA repair</keyword>
<keyword id="KW-0255">Endonuclease</keyword>
<keyword id="KW-0378">Hydrolase</keyword>
<keyword id="KW-0479">Metal-binding</keyword>
<keyword id="KW-0540">Nuclease</keyword>
<keyword id="KW-0862">Zinc</keyword>
<proteinExistence type="inferred from homology"/>
<dbReference type="EC" id="3.1.21.2" evidence="1"/>
<dbReference type="EMBL" id="AE017262">
    <property type="protein sequence ID" value="AAT04243.1"/>
    <property type="molecule type" value="Genomic_DNA"/>
</dbReference>
<dbReference type="RefSeq" id="WP_003725391.1">
    <property type="nucleotide sequence ID" value="NC_002973.6"/>
</dbReference>
<dbReference type="SMR" id="Q71ZM1"/>
<dbReference type="KEGG" id="lmf:LMOf2365_1468"/>
<dbReference type="HOGENOM" id="CLU_025885_4_1_9"/>
<dbReference type="GO" id="GO:0008833">
    <property type="term" value="F:deoxyribonuclease IV (phage-T4-induced) activity"/>
    <property type="evidence" value="ECO:0007669"/>
    <property type="project" value="UniProtKB-UniRule"/>
</dbReference>
<dbReference type="GO" id="GO:0003677">
    <property type="term" value="F:DNA binding"/>
    <property type="evidence" value="ECO:0007669"/>
    <property type="project" value="InterPro"/>
</dbReference>
<dbReference type="GO" id="GO:0003906">
    <property type="term" value="F:DNA-(apurinic or apyrimidinic site) endonuclease activity"/>
    <property type="evidence" value="ECO:0007669"/>
    <property type="project" value="TreeGrafter"/>
</dbReference>
<dbReference type="GO" id="GO:0008081">
    <property type="term" value="F:phosphoric diester hydrolase activity"/>
    <property type="evidence" value="ECO:0007669"/>
    <property type="project" value="TreeGrafter"/>
</dbReference>
<dbReference type="GO" id="GO:0008270">
    <property type="term" value="F:zinc ion binding"/>
    <property type="evidence" value="ECO:0007669"/>
    <property type="project" value="UniProtKB-UniRule"/>
</dbReference>
<dbReference type="GO" id="GO:0006284">
    <property type="term" value="P:base-excision repair"/>
    <property type="evidence" value="ECO:0007669"/>
    <property type="project" value="TreeGrafter"/>
</dbReference>
<dbReference type="CDD" id="cd00019">
    <property type="entry name" value="AP2Ec"/>
    <property type="match status" value="1"/>
</dbReference>
<dbReference type="FunFam" id="3.20.20.150:FF:000001">
    <property type="entry name" value="Probable endonuclease 4"/>
    <property type="match status" value="1"/>
</dbReference>
<dbReference type="Gene3D" id="3.20.20.150">
    <property type="entry name" value="Divalent-metal-dependent TIM barrel enzymes"/>
    <property type="match status" value="1"/>
</dbReference>
<dbReference type="HAMAP" id="MF_00152">
    <property type="entry name" value="Nfo"/>
    <property type="match status" value="1"/>
</dbReference>
<dbReference type="InterPro" id="IPR001719">
    <property type="entry name" value="AP_endonuc_2"/>
</dbReference>
<dbReference type="InterPro" id="IPR018246">
    <property type="entry name" value="AP_endonuc_F2_Zn_BS"/>
</dbReference>
<dbReference type="InterPro" id="IPR036237">
    <property type="entry name" value="Xyl_isomerase-like_sf"/>
</dbReference>
<dbReference type="InterPro" id="IPR013022">
    <property type="entry name" value="Xyl_isomerase-like_TIM-brl"/>
</dbReference>
<dbReference type="NCBIfam" id="TIGR00587">
    <property type="entry name" value="nfo"/>
    <property type="match status" value="1"/>
</dbReference>
<dbReference type="NCBIfam" id="NF002196">
    <property type="entry name" value="PRK01060.1-1"/>
    <property type="match status" value="1"/>
</dbReference>
<dbReference type="PANTHER" id="PTHR21445:SF0">
    <property type="entry name" value="APURINIC-APYRIMIDINIC ENDONUCLEASE"/>
    <property type="match status" value="1"/>
</dbReference>
<dbReference type="PANTHER" id="PTHR21445">
    <property type="entry name" value="ENDONUCLEASE IV ENDODEOXYRIBONUCLEASE IV"/>
    <property type="match status" value="1"/>
</dbReference>
<dbReference type="Pfam" id="PF01261">
    <property type="entry name" value="AP_endonuc_2"/>
    <property type="match status" value="1"/>
</dbReference>
<dbReference type="SMART" id="SM00518">
    <property type="entry name" value="AP2Ec"/>
    <property type="match status" value="1"/>
</dbReference>
<dbReference type="SUPFAM" id="SSF51658">
    <property type="entry name" value="Xylose isomerase-like"/>
    <property type="match status" value="1"/>
</dbReference>
<dbReference type="PROSITE" id="PS00729">
    <property type="entry name" value="AP_NUCLEASE_F2_1"/>
    <property type="match status" value="1"/>
</dbReference>
<dbReference type="PROSITE" id="PS00730">
    <property type="entry name" value="AP_NUCLEASE_F2_2"/>
    <property type="match status" value="1"/>
</dbReference>
<dbReference type="PROSITE" id="PS00731">
    <property type="entry name" value="AP_NUCLEASE_F2_3"/>
    <property type="match status" value="1"/>
</dbReference>
<dbReference type="PROSITE" id="PS51432">
    <property type="entry name" value="AP_NUCLEASE_F2_4"/>
    <property type="match status" value="1"/>
</dbReference>
<sequence length="297" mass="32800">MLRLGSHVSMSGKKMLLGASEEAASYGSNTFMIYTGAPQNTRRKPIEELNIEAGLEHMKAHDMADIVVHAPYIINIGNSVKPETFELGVNFLQSEIERTRALGAKQIVLHPGAHVGEGADKGIKQIIQGLNEALIHDQDVQIALETMAGKGSECGRTFEEIAQIIDGVTHNELLSVTFDTCHTHDAGYDIVNDFDGVLNEFDKIIGVDRLKVLHINDSKNERGAHKDRHANIGFGHIGFDALHYIVHHPQLADVPKILETPYVGEDKASKKAPYKWEIAMLRNGEFDPDLLNKIQNS</sequence>
<accession>Q71ZM1</accession>
<protein>
    <recommendedName>
        <fullName evidence="1">Probable endonuclease 4</fullName>
        <ecNumber evidence="1">3.1.21.2</ecNumber>
    </recommendedName>
    <alternativeName>
        <fullName evidence="1">Endodeoxyribonuclease IV</fullName>
    </alternativeName>
    <alternativeName>
        <fullName evidence="1">Endonuclease IV</fullName>
    </alternativeName>
</protein>
<reference key="1">
    <citation type="journal article" date="2004" name="Nucleic Acids Res.">
        <title>Whole genome comparisons of serotype 4b and 1/2a strains of the food-borne pathogen Listeria monocytogenes reveal new insights into the core genome components of this species.</title>
        <authorList>
            <person name="Nelson K.E."/>
            <person name="Fouts D.E."/>
            <person name="Mongodin E.F."/>
            <person name="Ravel J."/>
            <person name="DeBoy R.T."/>
            <person name="Kolonay J.F."/>
            <person name="Rasko D.A."/>
            <person name="Angiuoli S.V."/>
            <person name="Gill S.R."/>
            <person name="Paulsen I.T."/>
            <person name="Peterson J.D."/>
            <person name="White O."/>
            <person name="Nelson W.C."/>
            <person name="Nierman W.C."/>
            <person name="Beanan M.J."/>
            <person name="Brinkac L.M."/>
            <person name="Daugherty S.C."/>
            <person name="Dodson R.J."/>
            <person name="Durkin A.S."/>
            <person name="Madupu R."/>
            <person name="Haft D.H."/>
            <person name="Selengut J."/>
            <person name="Van Aken S.E."/>
            <person name="Khouri H.M."/>
            <person name="Fedorova N."/>
            <person name="Forberger H.A."/>
            <person name="Tran B."/>
            <person name="Kathariou S."/>
            <person name="Wonderling L.D."/>
            <person name="Uhlich G.A."/>
            <person name="Bayles D.O."/>
            <person name="Luchansky J.B."/>
            <person name="Fraser C.M."/>
        </authorList>
    </citation>
    <scope>NUCLEOTIDE SEQUENCE [LARGE SCALE GENOMIC DNA]</scope>
    <source>
        <strain>F2365</strain>
    </source>
</reference>
<name>END4_LISMF</name>
<evidence type="ECO:0000255" key="1">
    <source>
        <dbReference type="HAMAP-Rule" id="MF_00152"/>
    </source>
</evidence>